<name>GNAI2_CHICK</name>
<reference key="1">
    <citation type="journal article" date="1994" name="Gene">
        <title>Cloning of cDNAs coding for the G alpha i1 and G alpha i2 G-proteins from chick brain.</title>
        <authorList>
            <person name="Kilbourne E.J."/>
            <person name="Galper J.B."/>
        </authorList>
    </citation>
    <scope>NUCLEOTIDE SEQUENCE [MRNA]</scope>
</reference>
<proteinExistence type="evidence at transcript level"/>
<dbReference type="EMBL" id="L24549">
    <property type="protein sequence ID" value="AAA65067.1"/>
    <property type="molecule type" value="mRNA"/>
</dbReference>
<dbReference type="PIR" id="I50238">
    <property type="entry name" value="I50238"/>
</dbReference>
<dbReference type="RefSeq" id="NP_990733.1">
    <property type="nucleotide sequence ID" value="NM_205402.3"/>
</dbReference>
<dbReference type="SMR" id="P50147"/>
<dbReference type="BioGRID" id="676620">
    <property type="interactions" value="1"/>
</dbReference>
<dbReference type="FunCoup" id="P50147">
    <property type="interactions" value="3156"/>
</dbReference>
<dbReference type="PaxDb" id="9031-ENSGALP00000007379"/>
<dbReference type="Ensembl" id="ENSGALT00010066895.1">
    <property type="protein sequence ID" value="ENSGALP00010040922.1"/>
    <property type="gene ID" value="ENSGALG00010027608.1"/>
</dbReference>
<dbReference type="GeneID" id="396367"/>
<dbReference type="KEGG" id="gga:396367"/>
<dbReference type="CTD" id="2771"/>
<dbReference type="VEuPathDB" id="HostDB:geneid_396367"/>
<dbReference type="eggNOG" id="KOG0082">
    <property type="taxonomic scope" value="Eukaryota"/>
</dbReference>
<dbReference type="GeneTree" id="ENSGT00940000155125"/>
<dbReference type="HOGENOM" id="CLU_014184_6_0_1"/>
<dbReference type="InParanoid" id="P50147"/>
<dbReference type="OMA" id="YMQLQFE"/>
<dbReference type="OrthoDB" id="5817230at2759"/>
<dbReference type="PhylomeDB" id="P50147"/>
<dbReference type="Reactome" id="R-GGA-170670">
    <property type="pathway name" value="Adenylate cyclase inhibitory pathway"/>
</dbReference>
<dbReference type="Reactome" id="R-GGA-392170">
    <property type="pathway name" value="ADP signalling through P2Y purinoceptor 12"/>
</dbReference>
<dbReference type="Reactome" id="R-GGA-418594">
    <property type="pathway name" value="G alpha (i) signalling events"/>
</dbReference>
<dbReference type="Reactome" id="R-GGA-9009391">
    <property type="pathway name" value="Extra-nuclear estrogen signaling"/>
</dbReference>
<dbReference type="PRO" id="PR:P50147"/>
<dbReference type="Proteomes" id="UP000000539">
    <property type="component" value="Chromosome 12"/>
</dbReference>
<dbReference type="Bgee" id="ENSGALG00000035645">
    <property type="expression patterns" value="Expressed in granulocyte and 14 other cell types or tissues"/>
</dbReference>
<dbReference type="GO" id="GO:0005813">
    <property type="term" value="C:centrosome"/>
    <property type="evidence" value="ECO:0000250"/>
    <property type="project" value="UniProtKB"/>
</dbReference>
<dbReference type="GO" id="GO:0036064">
    <property type="term" value="C:ciliary basal body"/>
    <property type="evidence" value="ECO:0007669"/>
    <property type="project" value="Ensembl"/>
</dbReference>
<dbReference type="GO" id="GO:0005737">
    <property type="term" value="C:cytoplasm"/>
    <property type="evidence" value="ECO:0000250"/>
    <property type="project" value="UniProtKB"/>
</dbReference>
<dbReference type="GO" id="GO:0005829">
    <property type="term" value="C:cytosol"/>
    <property type="evidence" value="ECO:0007669"/>
    <property type="project" value="Ensembl"/>
</dbReference>
<dbReference type="GO" id="GO:0005834">
    <property type="term" value="C:heterotrimeric G-protein complex"/>
    <property type="evidence" value="ECO:0000318"/>
    <property type="project" value="GO_Central"/>
</dbReference>
<dbReference type="GO" id="GO:0030496">
    <property type="term" value="C:midbody"/>
    <property type="evidence" value="ECO:0000250"/>
    <property type="project" value="UniProtKB"/>
</dbReference>
<dbReference type="GO" id="GO:0005654">
    <property type="term" value="C:nucleoplasm"/>
    <property type="evidence" value="ECO:0007669"/>
    <property type="project" value="Ensembl"/>
</dbReference>
<dbReference type="GO" id="GO:0005886">
    <property type="term" value="C:plasma membrane"/>
    <property type="evidence" value="ECO:0000250"/>
    <property type="project" value="UniProtKB"/>
</dbReference>
<dbReference type="GO" id="GO:0001664">
    <property type="term" value="F:G protein-coupled receptor binding"/>
    <property type="evidence" value="ECO:0000318"/>
    <property type="project" value="GO_Central"/>
</dbReference>
<dbReference type="GO" id="GO:0031683">
    <property type="term" value="F:G-protein beta/gamma-subunit complex binding"/>
    <property type="evidence" value="ECO:0000318"/>
    <property type="project" value="GO_Central"/>
</dbReference>
<dbReference type="GO" id="GO:0005525">
    <property type="term" value="F:GTP binding"/>
    <property type="evidence" value="ECO:0007669"/>
    <property type="project" value="UniProtKB-KW"/>
</dbReference>
<dbReference type="GO" id="GO:0003924">
    <property type="term" value="F:GTPase activity"/>
    <property type="evidence" value="ECO:0000318"/>
    <property type="project" value="GO_Central"/>
</dbReference>
<dbReference type="GO" id="GO:0046872">
    <property type="term" value="F:metal ion binding"/>
    <property type="evidence" value="ECO:0007669"/>
    <property type="project" value="UniProtKB-KW"/>
</dbReference>
<dbReference type="GO" id="GO:0007193">
    <property type="term" value="P:adenylate cyclase-inhibiting G protein-coupled receptor signaling pathway"/>
    <property type="evidence" value="ECO:0000318"/>
    <property type="project" value="GO_Central"/>
</dbReference>
<dbReference type="GO" id="GO:0051301">
    <property type="term" value="P:cell division"/>
    <property type="evidence" value="ECO:0000250"/>
    <property type="project" value="UniProtKB"/>
</dbReference>
<dbReference type="GO" id="GO:0001973">
    <property type="term" value="P:G protein-coupled adenosine receptor signaling pathway"/>
    <property type="evidence" value="ECO:0000318"/>
    <property type="project" value="GO_Central"/>
</dbReference>
<dbReference type="GO" id="GO:0007214">
    <property type="term" value="P:gamma-aminobutyric acid signaling pathway"/>
    <property type="evidence" value="ECO:0000318"/>
    <property type="project" value="GO_Central"/>
</dbReference>
<dbReference type="GO" id="GO:0008284">
    <property type="term" value="P:positive regulation of cell population proliferation"/>
    <property type="evidence" value="ECO:0007669"/>
    <property type="project" value="Ensembl"/>
</dbReference>
<dbReference type="CDD" id="cd00066">
    <property type="entry name" value="G-alpha"/>
    <property type="match status" value="1"/>
</dbReference>
<dbReference type="FunFam" id="1.10.400.10:FF:000001">
    <property type="entry name" value="Guanine nucleotide-binding protein G(I) subunit alpha"/>
    <property type="match status" value="1"/>
</dbReference>
<dbReference type="FunFam" id="3.40.50.300:FF:002487">
    <property type="entry name" value="Guanine nucleotide-binding protein G(i) subunit alpha-1"/>
    <property type="match status" value="1"/>
</dbReference>
<dbReference type="FunFam" id="3.40.50.300:FF:003559">
    <property type="entry name" value="Guanine nucleotide-binding protein G(i) subunit alpha-1"/>
    <property type="match status" value="1"/>
</dbReference>
<dbReference type="Gene3D" id="1.10.400.10">
    <property type="entry name" value="GI Alpha 1, domain 2-like"/>
    <property type="match status" value="1"/>
</dbReference>
<dbReference type="Gene3D" id="3.40.50.300">
    <property type="entry name" value="P-loop containing nucleotide triphosphate hydrolases"/>
    <property type="match status" value="1"/>
</dbReference>
<dbReference type="InterPro" id="IPR001408">
    <property type="entry name" value="Gprotein_alpha_I"/>
</dbReference>
<dbReference type="InterPro" id="IPR001019">
    <property type="entry name" value="Gprotein_alpha_su"/>
</dbReference>
<dbReference type="InterPro" id="IPR011025">
    <property type="entry name" value="GproteinA_insert"/>
</dbReference>
<dbReference type="InterPro" id="IPR027417">
    <property type="entry name" value="P-loop_NTPase"/>
</dbReference>
<dbReference type="PANTHER" id="PTHR10218">
    <property type="entry name" value="GTP-BINDING PROTEIN ALPHA SUBUNIT"/>
    <property type="match status" value="1"/>
</dbReference>
<dbReference type="PANTHER" id="PTHR10218:SF73">
    <property type="entry name" value="GUANINE NUCLEOTIDE-BINDING PROTEIN G(I) SUBUNIT ALPHA-2"/>
    <property type="match status" value="1"/>
</dbReference>
<dbReference type="Pfam" id="PF00503">
    <property type="entry name" value="G-alpha"/>
    <property type="match status" value="1"/>
</dbReference>
<dbReference type="PRINTS" id="PR00318">
    <property type="entry name" value="GPROTEINA"/>
</dbReference>
<dbReference type="PRINTS" id="PR00441">
    <property type="entry name" value="GPROTEINAI"/>
</dbReference>
<dbReference type="SMART" id="SM00275">
    <property type="entry name" value="G_alpha"/>
    <property type="match status" value="1"/>
</dbReference>
<dbReference type="SUPFAM" id="SSF52540">
    <property type="entry name" value="P-loop containing nucleoside triphosphate hydrolases"/>
    <property type="match status" value="1"/>
</dbReference>
<dbReference type="SUPFAM" id="SSF47895">
    <property type="entry name" value="Transducin (alpha subunit), insertion domain"/>
    <property type="match status" value="1"/>
</dbReference>
<dbReference type="PROSITE" id="PS51882">
    <property type="entry name" value="G_ALPHA"/>
    <property type="match status" value="1"/>
</dbReference>
<accession>P50147</accession>
<evidence type="ECO:0000250" key="1"/>
<evidence type="ECO:0000255" key="2"/>
<evidence type="ECO:0000255" key="3">
    <source>
        <dbReference type="PROSITE-ProRule" id="PRU01230"/>
    </source>
</evidence>
<evidence type="ECO:0000305" key="4"/>
<gene>
    <name type="primary">GNAI2</name>
</gene>
<keyword id="KW-0131">Cell cycle</keyword>
<keyword id="KW-0132">Cell division</keyword>
<keyword id="KW-1003">Cell membrane</keyword>
<keyword id="KW-0963">Cytoplasm</keyword>
<keyword id="KW-0206">Cytoskeleton</keyword>
<keyword id="KW-0342">GTP-binding</keyword>
<keyword id="KW-0449">Lipoprotein</keyword>
<keyword id="KW-0460">Magnesium</keyword>
<keyword id="KW-0472">Membrane</keyword>
<keyword id="KW-0479">Metal-binding</keyword>
<keyword id="KW-0519">Myristate</keyword>
<keyword id="KW-0547">Nucleotide-binding</keyword>
<keyword id="KW-0564">Palmitate</keyword>
<keyword id="KW-1185">Reference proteome</keyword>
<keyword id="KW-0807">Transducer</keyword>
<feature type="initiator methionine" description="Removed" evidence="1">
    <location>
        <position position="1"/>
    </location>
</feature>
<feature type="chain" id="PRO_0000203683" description="Guanine nucleotide-binding protein G(i) subunit alpha-2">
    <location>
        <begin position="2"/>
        <end position="355"/>
    </location>
</feature>
<feature type="domain" description="G-alpha" evidence="3">
    <location>
        <begin position="32"/>
        <end position="355"/>
    </location>
</feature>
<feature type="region of interest" description="G1 motif" evidence="3">
    <location>
        <begin position="35"/>
        <end position="48"/>
    </location>
</feature>
<feature type="region of interest" description="G2 motif" evidence="3">
    <location>
        <begin position="174"/>
        <end position="182"/>
    </location>
</feature>
<feature type="region of interest" description="G3 motif" evidence="3">
    <location>
        <begin position="197"/>
        <end position="206"/>
    </location>
</feature>
<feature type="region of interest" description="G4 motif" evidence="3">
    <location>
        <begin position="266"/>
        <end position="273"/>
    </location>
</feature>
<feature type="region of interest" description="G5 motif" evidence="3">
    <location>
        <begin position="325"/>
        <end position="330"/>
    </location>
</feature>
<feature type="binding site" evidence="1">
    <location>
        <begin position="40"/>
        <end position="47"/>
    </location>
    <ligand>
        <name>GTP</name>
        <dbReference type="ChEBI" id="CHEBI:37565"/>
    </ligand>
</feature>
<feature type="binding site" evidence="1">
    <location>
        <position position="47"/>
    </location>
    <ligand>
        <name>Mg(2+)</name>
        <dbReference type="ChEBI" id="CHEBI:18420"/>
    </ligand>
</feature>
<feature type="binding site" evidence="1">
    <location>
        <begin position="176"/>
        <end position="182"/>
    </location>
    <ligand>
        <name>GTP</name>
        <dbReference type="ChEBI" id="CHEBI:37565"/>
    </ligand>
</feature>
<feature type="binding site" evidence="1">
    <location>
        <position position="182"/>
    </location>
    <ligand>
        <name>Mg(2+)</name>
        <dbReference type="ChEBI" id="CHEBI:18420"/>
    </ligand>
</feature>
<feature type="binding site" evidence="1">
    <location>
        <begin position="201"/>
        <end position="205"/>
    </location>
    <ligand>
        <name>GTP</name>
        <dbReference type="ChEBI" id="CHEBI:37565"/>
    </ligand>
</feature>
<feature type="binding site" evidence="1">
    <location>
        <begin position="270"/>
        <end position="273"/>
    </location>
    <ligand>
        <name>GTP</name>
        <dbReference type="ChEBI" id="CHEBI:37565"/>
    </ligand>
</feature>
<feature type="binding site" evidence="1">
    <location>
        <position position="327"/>
    </location>
    <ligand>
        <name>GTP</name>
        <dbReference type="ChEBI" id="CHEBI:37565"/>
    </ligand>
</feature>
<feature type="lipid moiety-binding region" description="N-myristoyl glycine" evidence="2">
    <location>
        <position position="2"/>
    </location>
</feature>
<feature type="lipid moiety-binding region" description="S-palmitoyl cysteine" evidence="2">
    <location>
        <position position="3"/>
    </location>
</feature>
<comment type="function">
    <text evidence="1">Guanine nucleotide-binding proteins (G proteins) are involved as modulators or transducers in various transmembrane signaling systems. The G(i) proteins are involved in hormonal regulation of adenylate cyclase: they inhibit the cyclase in response to beta-adrenergic stimuli. May play a role in cell division (By similarity).</text>
</comment>
<comment type="subunit">
    <text>G proteins are composed of 3 units; alpha, beta and gamma. The alpha chain contains the guanine nucleotide binding site.</text>
</comment>
<comment type="subcellular location">
    <subcellularLocation>
        <location evidence="1">Cytoplasm</location>
    </subcellularLocation>
    <subcellularLocation>
        <location evidence="1">Cytoplasm</location>
        <location evidence="1">Cytoskeleton</location>
        <location evidence="1">Microtubule organizing center</location>
        <location evidence="1">Centrosome</location>
    </subcellularLocation>
    <subcellularLocation>
        <location evidence="1">Cell membrane</location>
    </subcellularLocation>
</comment>
<comment type="similarity">
    <text evidence="4">Belongs to the G-alpha family. G(i/o/t/z) subfamily.</text>
</comment>
<sequence length="355" mass="40577">MGCTVSAEDKAAAERSRMIDRNLREDGEKAAREVKLLLLGAGESGKSTIVKQMKIIHEDGYSEEECRQYKAVVYSNTIQSIMAIIKAMGNLQIDFGDSSRADDARQLFALACTAEEQGIMPEDLANVIRRLWADHGVQACFNRSREYQLNDSAAYYLNDLERIARADYIPTQQDVLRTRVKTTGIVETHFTFKDLHFKMFDVGGQRSERKKWIHCFEGVTAIIFCVALSAYDLVLAEDEEMNRMHESMKLFDSICNNKWFTDTSIILFLNKKDLFEEKIVHSPLTICFPEYTGANKYDEAAGYIQSKFEDLNKRKDTKEIYTHFTCATDTKNVQFVFDAVTDVIIKNNLKDCGLF</sequence>
<organism>
    <name type="scientific">Gallus gallus</name>
    <name type="common">Chicken</name>
    <dbReference type="NCBI Taxonomy" id="9031"/>
    <lineage>
        <taxon>Eukaryota</taxon>
        <taxon>Metazoa</taxon>
        <taxon>Chordata</taxon>
        <taxon>Craniata</taxon>
        <taxon>Vertebrata</taxon>
        <taxon>Euteleostomi</taxon>
        <taxon>Archelosauria</taxon>
        <taxon>Archosauria</taxon>
        <taxon>Dinosauria</taxon>
        <taxon>Saurischia</taxon>
        <taxon>Theropoda</taxon>
        <taxon>Coelurosauria</taxon>
        <taxon>Aves</taxon>
        <taxon>Neognathae</taxon>
        <taxon>Galloanserae</taxon>
        <taxon>Galliformes</taxon>
        <taxon>Phasianidae</taxon>
        <taxon>Phasianinae</taxon>
        <taxon>Gallus</taxon>
    </lineage>
</organism>
<protein>
    <recommendedName>
        <fullName>Guanine nucleotide-binding protein G(i) subunit alpha-2</fullName>
    </recommendedName>
    <alternativeName>
        <fullName>Adenylate cyclase-inhibiting G alpha protein</fullName>
    </alternativeName>
</protein>